<name>DISA_MYCBO</name>
<proteinExistence type="inferred from homology"/>
<protein>
    <recommendedName>
        <fullName evidence="1">DNA integrity scanning protein DisA</fullName>
    </recommendedName>
    <alternativeName>
        <fullName evidence="1">Cyclic di-AMP synthase</fullName>
        <shortName evidence="1">c-di-AMP synthase</shortName>
    </alternativeName>
    <alternativeName>
        <fullName evidence="1">Diadenylate cyclase</fullName>
        <ecNumber evidence="1">2.7.7.85</ecNumber>
    </alternativeName>
</protein>
<feature type="chain" id="PRO_0000255647" description="DNA integrity scanning protein DisA">
    <location>
        <begin position="1"/>
        <end position="358"/>
    </location>
</feature>
<feature type="domain" description="DAC" evidence="2">
    <location>
        <begin position="6"/>
        <end position="144"/>
    </location>
</feature>
<feature type="binding site" evidence="1">
    <location>
        <position position="73"/>
    </location>
    <ligand>
        <name>ATP</name>
        <dbReference type="ChEBI" id="CHEBI:30616"/>
    </ligand>
</feature>
<feature type="binding site" evidence="1">
    <location>
        <position position="91"/>
    </location>
    <ligand>
        <name>ATP</name>
        <dbReference type="ChEBI" id="CHEBI:30616"/>
    </ligand>
</feature>
<feature type="binding site" evidence="1">
    <location>
        <begin position="104"/>
        <end position="108"/>
    </location>
    <ligand>
        <name>ATP</name>
        <dbReference type="ChEBI" id="CHEBI:30616"/>
    </ligand>
</feature>
<dbReference type="EC" id="2.7.7.85" evidence="1"/>
<dbReference type="EMBL" id="LT708304">
    <property type="protein sequence ID" value="SIU02244.1"/>
    <property type="molecule type" value="Genomic_DNA"/>
</dbReference>
<dbReference type="RefSeq" id="NP_857256.1">
    <property type="nucleotide sequence ID" value="NC_002945.3"/>
</dbReference>
<dbReference type="RefSeq" id="WP_010950916.1">
    <property type="nucleotide sequence ID" value="NC_002945.4"/>
</dbReference>
<dbReference type="SMR" id="Q7TW52"/>
<dbReference type="KEGG" id="mbo:BQ2027_MB3617"/>
<dbReference type="PATRIC" id="fig|233413.5.peg.3963"/>
<dbReference type="Proteomes" id="UP000001419">
    <property type="component" value="Chromosome"/>
</dbReference>
<dbReference type="GO" id="GO:0004016">
    <property type="term" value="F:adenylate cyclase activity"/>
    <property type="evidence" value="ECO:0007669"/>
    <property type="project" value="TreeGrafter"/>
</dbReference>
<dbReference type="GO" id="GO:0005524">
    <property type="term" value="F:ATP binding"/>
    <property type="evidence" value="ECO:0007669"/>
    <property type="project" value="UniProtKB-UniRule"/>
</dbReference>
<dbReference type="GO" id="GO:0106408">
    <property type="term" value="F:diadenylate cyclase activity"/>
    <property type="evidence" value="ECO:0007669"/>
    <property type="project" value="UniProtKB-EC"/>
</dbReference>
<dbReference type="GO" id="GO:0003677">
    <property type="term" value="F:DNA binding"/>
    <property type="evidence" value="ECO:0007669"/>
    <property type="project" value="UniProtKB-UniRule"/>
</dbReference>
<dbReference type="GO" id="GO:0006281">
    <property type="term" value="P:DNA repair"/>
    <property type="evidence" value="ECO:0007669"/>
    <property type="project" value="UniProtKB-UniRule"/>
</dbReference>
<dbReference type="FunFam" id="1.10.150.20:FF:000016">
    <property type="entry name" value="DNA integrity scanning protein DisA"/>
    <property type="match status" value="1"/>
</dbReference>
<dbReference type="FunFam" id="1.20.1260.110:FF:000002">
    <property type="entry name" value="DNA integrity scanning protein DisA"/>
    <property type="match status" value="1"/>
</dbReference>
<dbReference type="FunFam" id="3.40.1700.10:FF:000001">
    <property type="entry name" value="DNA integrity scanning protein DisA"/>
    <property type="match status" value="1"/>
</dbReference>
<dbReference type="Gene3D" id="1.10.150.20">
    <property type="entry name" value="5' to 3' exonuclease, C-terminal subdomain"/>
    <property type="match status" value="1"/>
</dbReference>
<dbReference type="Gene3D" id="1.20.1260.110">
    <property type="entry name" value="DNA integrity scanning linker region"/>
    <property type="match status" value="1"/>
</dbReference>
<dbReference type="Gene3D" id="3.40.1700.10">
    <property type="entry name" value="DNA integrity scanning protein, DisA, N-terminal domain"/>
    <property type="match status" value="1"/>
</dbReference>
<dbReference type="HAMAP" id="MF_01438">
    <property type="entry name" value="DisA"/>
    <property type="match status" value="1"/>
</dbReference>
<dbReference type="InterPro" id="IPR050338">
    <property type="entry name" value="DisA"/>
</dbReference>
<dbReference type="InterPro" id="IPR038331">
    <property type="entry name" value="DisA_sf"/>
</dbReference>
<dbReference type="InterPro" id="IPR036888">
    <property type="entry name" value="DNA_integrity_DisA_N_sf"/>
</dbReference>
<dbReference type="InterPro" id="IPR018906">
    <property type="entry name" value="DNA_integrity_scan_DisA_link"/>
</dbReference>
<dbReference type="InterPro" id="IPR003390">
    <property type="entry name" value="DNA_integrity_scan_DisA_N"/>
</dbReference>
<dbReference type="InterPro" id="IPR023763">
    <property type="entry name" value="DNA_integrity_scanning_protein"/>
</dbReference>
<dbReference type="InterPro" id="IPR010994">
    <property type="entry name" value="RuvA_2-like"/>
</dbReference>
<dbReference type="NCBIfam" id="NF010009">
    <property type="entry name" value="PRK13482.1"/>
    <property type="match status" value="1"/>
</dbReference>
<dbReference type="PANTHER" id="PTHR34185">
    <property type="entry name" value="DIADENYLATE CYCLASE"/>
    <property type="match status" value="1"/>
</dbReference>
<dbReference type="PANTHER" id="PTHR34185:SF3">
    <property type="entry name" value="DNA INTEGRITY SCANNING PROTEIN DISA"/>
    <property type="match status" value="1"/>
</dbReference>
<dbReference type="Pfam" id="PF02457">
    <property type="entry name" value="DAC"/>
    <property type="match status" value="1"/>
</dbReference>
<dbReference type="Pfam" id="PF10635">
    <property type="entry name" value="DisA-linker"/>
    <property type="match status" value="1"/>
</dbReference>
<dbReference type="SUPFAM" id="SSF47781">
    <property type="entry name" value="RuvA domain 2-like"/>
    <property type="match status" value="1"/>
</dbReference>
<dbReference type="SUPFAM" id="SSF143597">
    <property type="entry name" value="YojJ-like"/>
    <property type="match status" value="1"/>
</dbReference>
<dbReference type="PROSITE" id="PS51794">
    <property type="entry name" value="DAC"/>
    <property type="match status" value="1"/>
</dbReference>
<reference key="1">
    <citation type="journal article" date="2003" name="Proc. Natl. Acad. Sci. U.S.A.">
        <title>The complete genome sequence of Mycobacterium bovis.</title>
        <authorList>
            <person name="Garnier T."/>
            <person name="Eiglmeier K."/>
            <person name="Camus J.-C."/>
            <person name="Medina N."/>
            <person name="Mansoor H."/>
            <person name="Pryor M."/>
            <person name="Duthoy S."/>
            <person name="Grondin S."/>
            <person name="Lacroix C."/>
            <person name="Monsempe C."/>
            <person name="Simon S."/>
            <person name="Harris B."/>
            <person name="Atkin R."/>
            <person name="Doggett J."/>
            <person name="Mayes R."/>
            <person name="Keating L."/>
            <person name="Wheeler P.R."/>
            <person name="Parkhill J."/>
            <person name="Barrell B.G."/>
            <person name="Cole S.T."/>
            <person name="Gordon S.V."/>
            <person name="Hewinson R.G."/>
        </authorList>
    </citation>
    <scope>NUCLEOTIDE SEQUENCE [LARGE SCALE GENOMIC DNA]</scope>
    <source>
        <strain>ATCC BAA-935 / AF2122/97</strain>
    </source>
</reference>
<reference key="2">
    <citation type="journal article" date="2017" name="Genome Announc.">
        <title>Updated reference genome sequence and annotation of Mycobacterium bovis AF2122/97.</title>
        <authorList>
            <person name="Malone K.M."/>
            <person name="Farrell D."/>
            <person name="Stuber T.P."/>
            <person name="Schubert O.T."/>
            <person name="Aebersold R."/>
            <person name="Robbe-Austerman S."/>
            <person name="Gordon S.V."/>
        </authorList>
    </citation>
    <scope>NUCLEOTIDE SEQUENCE [LARGE SCALE GENOMIC DNA]</scope>
    <scope>GENOME REANNOTATION</scope>
    <source>
        <strain>ATCC BAA-935 / AF2122/97</strain>
    </source>
</reference>
<evidence type="ECO:0000255" key="1">
    <source>
        <dbReference type="HAMAP-Rule" id="MF_01438"/>
    </source>
</evidence>
<evidence type="ECO:0000255" key="2">
    <source>
        <dbReference type="PROSITE-ProRule" id="PRU01130"/>
    </source>
</evidence>
<organism>
    <name type="scientific">Mycobacterium bovis (strain ATCC BAA-935 / AF2122/97)</name>
    <dbReference type="NCBI Taxonomy" id="233413"/>
    <lineage>
        <taxon>Bacteria</taxon>
        <taxon>Bacillati</taxon>
        <taxon>Actinomycetota</taxon>
        <taxon>Actinomycetes</taxon>
        <taxon>Mycobacteriales</taxon>
        <taxon>Mycobacteriaceae</taxon>
        <taxon>Mycobacterium</taxon>
        <taxon>Mycobacterium tuberculosis complex</taxon>
    </lineage>
</organism>
<keyword id="KW-0067">ATP-binding</keyword>
<keyword id="KW-0227">DNA damage</keyword>
<keyword id="KW-0234">DNA repair</keyword>
<keyword id="KW-0238">DNA-binding</keyword>
<keyword id="KW-0460">Magnesium</keyword>
<keyword id="KW-0547">Nucleotide-binding</keyword>
<keyword id="KW-0548">Nucleotidyltransferase</keyword>
<keyword id="KW-1185">Reference proteome</keyword>
<keyword id="KW-0808">Transferase</keyword>
<accession>Q7TW52</accession>
<accession>A0A1R3Y4L6</accession>
<accession>X2BNN8</accession>
<sequence>MHAVTRPTLREAVARLAPGTGLRDGLERILRGRTGALIVLGHDENVEAICDGGFSLDVRYAATRLRELCKMDGAVVLSTDGSRIVRANVQLVPDPSIPTDESGTRHRSAERAAIQTGYPVISVSHSMNIVTVYVRGERHVLTDSATILSRANQAIATLERYKTRLDEVSRQLSRAEIEDFVTLRDVMTVVQRLELVRRIGLVIDYDVVELGTDGRQLRLQLDELLGGNDTARELIVRDYHANPEPPSTGQINATLDELDALSDGDLLDFTALAKVFGYPTTTEAQDSALSPRGYRAMAGIPRLQFAHADLLVRAFGTLQGLLAASAGDLQSVDGIGAMWARHVRDGLSQLAESTISDQ</sequence>
<comment type="function">
    <text evidence="1">Participates in a DNA-damage check-point. DisA forms globular foci that rapidly scan along the chromosomes searching for lesions.</text>
</comment>
<comment type="function">
    <text evidence="1">Also has diadenylate cyclase activity, catalyzing the condensation of 2 ATP molecules into cyclic di-AMP (c-di-AMP). c-di-AMP likely acts as a signaling molecule that may couple DNA integrity with a cellular process.</text>
</comment>
<comment type="catalytic activity">
    <reaction evidence="1">
        <text>2 ATP = 3',3'-c-di-AMP + 2 diphosphate</text>
        <dbReference type="Rhea" id="RHEA:35655"/>
        <dbReference type="ChEBI" id="CHEBI:30616"/>
        <dbReference type="ChEBI" id="CHEBI:33019"/>
        <dbReference type="ChEBI" id="CHEBI:71500"/>
        <dbReference type="EC" id="2.7.7.85"/>
    </reaction>
</comment>
<comment type="cofactor">
    <cofactor evidence="1">
        <name>Mg(2+)</name>
        <dbReference type="ChEBI" id="CHEBI:18420"/>
    </cofactor>
</comment>
<comment type="subunit">
    <text evidence="1">Homooctamer.</text>
</comment>
<comment type="similarity">
    <text evidence="1">Belongs to the DisA family.</text>
</comment>
<gene>
    <name evidence="1" type="primary">disA</name>
    <name type="ordered locus">BQ2027_MB3617</name>
</gene>